<organism>
    <name type="scientific">Chlorobium luteolum (strain DSM 273 / BCRC 81028 / 2530)</name>
    <name type="common">Pelodictyon luteolum</name>
    <dbReference type="NCBI Taxonomy" id="319225"/>
    <lineage>
        <taxon>Bacteria</taxon>
        <taxon>Pseudomonadati</taxon>
        <taxon>Chlorobiota</taxon>
        <taxon>Chlorobiia</taxon>
        <taxon>Chlorobiales</taxon>
        <taxon>Chlorobiaceae</taxon>
        <taxon>Chlorobium/Pelodictyon group</taxon>
        <taxon>Pelodictyon</taxon>
    </lineage>
</organism>
<comment type="function">
    <text evidence="1">Catalyzes the GTP-dependent ribosomal translocation step during translation elongation. During this step, the ribosome changes from the pre-translocational (PRE) to the post-translocational (POST) state as the newly formed A-site-bound peptidyl-tRNA and P-site-bound deacylated tRNA move to the P and E sites, respectively. Catalyzes the coordinated movement of the two tRNA molecules, the mRNA and conformational changes in the ribosome.</text>
</comment>
<comment type="subcellular location">
    <subcellularLocation>
        <location evidence="1">Cytoplasm</location>
    </subcellularLocation>
</comment>
<comment type="similarity">
    <text evidence="1">Belongs to the TRAFAC class translation factor GTPase superfamily. Classic translation factor GTPase family. EF-G/EF-2 subfamily.</text>
</comment>
<keyword id="KW-0963">Cytoplasm</keyword>
<keyword id="KW-0251">Elongation factor</keyword>
<keyword id="KW-0342">GTP-binding</keyword>
<keyword id="KW-0547">Nucleotide-binding</keyword>
<keyword id="KW-0648">Protein biosynthesis</keyword>
<keyword id="KW-1185">Reference proteome</keyword>
<gene>
    <name evidence="1" type="primary">fusA</name>
    <name type="ordered locus">Plut_0177</name>
</gene>
<proteinExistence type="inferred from homology"/>
<reference key="1">
    <citation type="submission" date="2005-08" db="EMBL/GenBank/DDBJ databases">
        <title>Complete sequence of Pelodictyon luteolum DSM 273.</title>
        <authorList>
            <consortium name="US DOE Joint Genome Institute"/>
            <person name="Copeland A."/>
            <person name="Lucas S."/>
            <person name="Lapidus A."/>
            <person name="Barry K."/>
            <person name="Detter J.C."/>
            <person name="Glavina T."/>
            <person name="Hammon N."/>
            <person name="Israni S."/>
            <person name="Pitluck S."/>
            <person name="Bryant D."/>
            <person name="Schmutz J."/>
            <person name="Larimer F."/>
            <person name="Land M."/>
            <person name="Kyrpides N."/>
            <person name="Ivanova N."/>
            <person name="Richardson P."/>
        </authorList>
    </citation>
    <scope>NUCLEOTIDE SEQUENCE [LARGE SCALE GENOMIC DNA]</scope>
    <source>
        <strain>DSM 273 / BCRC 81028 / 2530</strain>
    </source>
</reference>
<sequence>MTRQVALDKVRNIGIMAHIDAGKTTTTERILYYTGRLHRMGEVHDGGATMDWMDQEKERGITITSAATTCFWAPKFGNYEGEKHRINIIDTPGHVDFTVEVERSLRVLDGAVALFCAVGGVEPQSETVWRQANKYGVPRVAYVNKMDRTGADFFDTVKSIKERLSANPVPIQIPIGEGEIFAGFVDLIRMKGIIYDKEDGSTYEEVAIPHDLENEARTWRINMLEAVSEVDESLLEKYLNGEDITEMEIRKVLRQATLKVSIIPVLCGSSFKNKGVQFMLDAVVDYLASPLDDGEVEGHHPRTEEPVVRHPNDDEPFAGLAFKIATDPFVGKLTFFRVYSGTLKAGSYVLNSITGKKERIGRVLQMHSNKREDIDCVYAGDIAAAVGLKEVRTGDTLCDENNPVVLEKMVFPEPVIQIAIEPKTKADSDKLGMSLAKLAEEDPTFRVKTDDETGQTLIAGMGELHLEILVDRLKREFKVEANVGQPQVAYRETIRAKVDFEGKFVRQSGGKGQFGLVNLTVEPLEEGKGYEFVDAVKGGVIPREYIPAVNAGIQQAMKDGVVAGYPMQDIKVTLYDGKYHDVDSSEMAFKIAGSIGFKGGARKASPVLLEPIMKVEVVTPEEYLGDVMGDLSSRRGHIEGMGQRAGAQFVHAKVPLSAMFGYSTDLRSMTQGRANYSMEFESYREVPKNIADALQDKRVTKDDY</sequence>
<protein>
    <recommendedName>
        <fullName evidence="1">Elongation factor G</fullName>
        <shortName evidence="1">EF-G</shortName>
    </recommendedName>
</protein>
<accession>Q3B6G4</accession>
<feature type="chain" id="PRO_0000263480" description="Elongation factor G">
    <location>
        <begin position="1"/>
        <end position="704"/>
    </location>
</feature>
<feature type="domain" description="tr-type G">
    <location>
        <begin position="8"/>
        <end position="291"/>
    </location>
</feature>
<feature type="binding site" evidence="1">
    <location>
        <begin position="17"/>
        <end position="24"/>
    </location>
    <ligand>
        <name>GTP</name>
        <dbReference type="ChEBI" id="CHEBI:37565"/>
    </ligand>
</feature>
<feature type="binding site" evidence="1">
    <location>
        <begin position="90"/>
        <end position="94"/>
    </location>
    <ligand>
        <name>GTP</name>
        <dbReference type="ChEBI" id="CHEBI:37565"/>
    </ligand>
</feature>
<feature type="binding site" evidence="1">
    <location>
        <begin position="144"/>
        <end position="147"/>
    </location>
    <ligand>
        <name>GTP</name>
        <dbReference type="ChEBI" id="CHEBI:37565"/>
    </ligand>
</feature>
<name>EFG_CHLL3</name>
<dbReference type="EMBL" id="CP000096">
    <property type="protein sequence ID" value="ABB23067.1"/>
    <property type="molecule type" value="Genomic_DNA"/>
</dbReference>
<dbReference type="RefSeq" id="WP_011356943.1">
    <property type="nucleotide sequence ID" value="NC_007512.1"/>
</dbReference>
<dbReference type="SMR" id="Q3B6G4"/>
<dbReference type="STRING" id="319225.Plut_0177"/>
<dbReference type="KEGG" id="plt:Plut_0177"/>
<dbReference type="eggNOG" id="COG0480">
    <property type="taxonomic scope" value="Bacteria"/>
</dbReference>
<dbReference type="HOGENOM" id="CLU_002794_4_1_10"/>
<dbReference type="OrthoDB" id="9801591at2"/>
<dbReference type="Proteomes" id="UP000002709">
    <property type="component" value="Chromosome"/>
</dbReference>
<dbReference type="GO" id="GO:0005737">
    <property type="term" value="C:cytoplasm"/>
    <property type="evidence" value="ECO:0007669"/>
    <property type="project" value="UniProtKB-SubCell"/>
</dbReference>
<dbReference type="GO" id="GO:0005525">
    <property type="term" value="F:GTP binding"/>
    <property type="evidence" value="ECO:0007669"/>
    <property type="project" value="UniProtKB-UniRule"/>
</dbReference>
<dbReference type="GO" id="GO:0003924">
    <property type="term" value="F:GTPase activity"/>
    <property type="evidence" value="ECO:0007669"/>
    <property type="project" value="InterPro"/>
</dbReference>
<dbReference type="GO" id="GO:0003746">
    <property type="term" value="F:translation elongation factor activity"/>
    <property type="evidence" value="ECO:0007669"/>
    <property type="project" value="UniProtKB-UniRule"/>
</dbReference>
<dbReference type="GO" id="GO:0032790">
    <property type="term" value="P:ribosome disassembly"/>
    <property type="evidence" value="ECO:0007669"/>
    <property type="project" value="TreeGrafter"/>
</dbReference>
<dbReference type="CDD" id="cd01886">
    <property type="entry name" value="EF-G"/>
    <property type="match status" value="1"/>
</dbReference>
<dbReference type="CDD" id="cd16262">
    <property type="entry name" value="EFG_III"/>
    <property type="match status" value="1"/>
</dbReference>
<dbReference type="CDD" id="cd01434">
    <property type="entry name" value="EFG_mtEFG1_IV"/>
    <property type="match status" value="1"/>
</dbReference>
<dbReference type="CDD" id="cd03713">
    <property type="entry name" value="EFG_mtEFG_C"/>
    <property type="match status" value="1"/>
</dbReference>
<dbReference type="CDD" id="cd04088">
    <property type="entry name" value="EFG_mtEFG_II"/>
    <property type="match status" value="1"/>
</dbReference>
<dbReference type="FunFam" id="2.40.30.10:FF:000006">
    <property type="entry name" value="Elongation factor G"/>
    <property type="match status" value="1"/>
</dbReference>
<dbReference type="FunFam" id="3.30.230.10:FF:000003">
    <property type="entry name" value="Elongation factor G"/>
    <property type="match status" value="1"/>
</dbReference>
<dbReference type="FunFam" id="3.30.70.240:FF:000001">
    <property type="entry name" value="Elongation factor G"/>
    <property type="match status" value="1"/>
</dbReference>
<dbReference type="FunFam" id="3.30.70.870:FF:000001">
    <property type="entry name" value="Elongation factor G"/>
    <property type="match status" value="1"/>
</dbReference>
<dbReference type="FunFam" id="3.40.50.300:FF:000029">
    <property type="entry name" value="Elongation factor G"/>
    <property type="match status" value="1"/>
</dbReference>
<dbReference type="Gene3D" id="3.30.230.10">
    <property type="match status" value="1"/>
</dbReference>
<dbReference type="Gene3D" id="3.30.70.240">
    <property type="match status" value="1"/>
</dbReference>
<dbReference type="Gene3D" id="3.30.70.870">
    <property type="entry name" value="Elongation Factor G (Translational Gtpase), domain 3"/>
    <property type="match status" value="1"/>
</dbReference>
<dbReference type="Gene3D" id="3.40.50.300">
    <property type="entry name" value="P-loop containing nucleotide triphosphate hydrolases"/>
    <property type="match status" value="1"/>
</dbReference>
<dbReference type="Gene3D" id="2.40.30.10">
    <property type="entry name" value="Translation factors"/>
    <property type="match status" value="1"/>
</dbReference>
<dbReference type="HAMAP" id="MF_00054_B">
    <property type="entry name" value="EF_G_EF_2_B"/>
    <property type="match status" value="1"/>
</dbReference>
<dbReference type="InterPro" id="IPR041095">
    <property type="entry name" value="EFG_II"/>
</dbReference>
<dbReference type="InterPro" id="IPR009022">
    <property type="entry name" value="EFG_III"/>
</dbReference>
<dbReference type="InterPro" id="IPR035647">
    <property type="entry name" value="EFG_III/V"/>
</dbReference>
<dbReference type="InterPro" id="IPR047872">
    <property type="entry name" value="EFG_IV"/>
</dbReference>
<dbReference type="InterPro" id="IPR035649">
    <property type="entry name" value="EFG_V"/>
</dbReference>
<dbReference type="InterPro" id="IPR000640">
    <property type="entry name" value="EFG_V-like"/>
</dbReference>
<dbReference type="InterPro" id="IPR004161">
    <property type="entry name" value="EFTu-like_2"/>
</dbReference>
<dbReference type="InterPro" id="IPR031157">
    <property type="entry name" value="G_TR_CS"/>
</dbReference>
<dbReference type="InterPro" id="IPR027417">
    <property type="entry name" value="P-loop_NTPase"/>
</dbReference>
<dbReference type="InterPro" id="IPR020568">
    <property type="entry name" value="Ribosomal_Su5_D2-typ_SF"/>
</dbReference>
<dbReference type="InterPro" id="IPR014721">
    <property type="entry name" value="Ribsml_uS5_D2-typ_fold_subgr"/>
</dbReference>
<dbReference type="InterPro" id="IPR005225">
    <property type="entry name" value="Small_GTP-bd"/>
</dbReference>
<dbReference type="InterPro" id="IPR000795">
    <property type="entry name" value="T_Tr_GTP-bd_dom"/>
</dbReference>
<dbReference type="InterPro" id="IPR009000">
    <property type="entry name" value="Transl_B-barrel_sf"/>
</dbReference>
<dbReference type="InterPro" id="IPR004540">
    <property type="entry name" value="Transl_elong_EFG/EF2"/>
</dbReference>
<dbReference type="InterPro" id="IPR005517">
    <property type="entry name" value="Transl_elong_EFG/EF2_IV"/>
</dbReference>
<dbReference type="NCBIfam" id="TIGR00484">
    <property type="entry name" value="EF-G"/>
    <property type="match status" value="1"/>
</dbReference>
<dbReference type="NCBIfam" id="NF009381">
    <property type="entry name" value="PRK12740.1-5"/>
    <property type="match status" value="1"/>
</dbReference>
<dbReference type="NCBIfam" id="TIGR00231">
    <property type="entry name" value="small_GTP"/>
    <property type="match status" value="1"/>
</dbReference>
<dbReference type="PANTHER" id="PTHR43261:SF1">
    <property type="entry name" value="RIBOSOME-RELEASING FACTOR 2, MITOCHONDRIAL"/>
    <property type="match status" value="1"/>
</dbReference>
<dbReference type="PANTHER" id="PTHR43261">
    <property type="entry name" value="TRANSLATION ELONGATION FACTOR G-RELATED"/>
    <property type="match status" value="1"/>
</dbReference>
<dbReference type="Pfam" id="PF00679">
    <property type="entry name" value="EFG_C"/>
    <property type="match status" value="1"/>
</dbReference>
<dbReference type="Pfam" id="PF14492">
    <property type="entry name" value="EFG_III"/>
    <property type="match status" value="1"/>
</dbReference>
<dbReference type="Pfam" id="PF03764">
    <property type="entry name" value="EFG_IV"/>
    <property type="match status" value="1"/>
</dbReference>
<dbReference type="Pfam" id="PF00009">
    <property type="entry name" value="GTP_EFTU"/>
    <property type="match status" value="1"/>
</dbReference>
<dbReference type="Pfam" id="PF03144">
    <property type="entry name" value="GTP_EFTU_D2"/>
    <property type="match status" value="1"/>
</dbReference>
<dbReference type="PRINTS" id="PR00315">
    <property type="entry name" value="ELONGATNFCT"/>
</dbReference>
<dbReference type="SMART" id="SM00838">
    <property type="entry name" value="EFG_C"/>
    <property type="match status" value="1"/>
</dbReference>
<dbReference type="SMART" id="SM00889">
    <property type="entry name" value="EFG_IV"/>
    <property type="match status" value="1"/>
</dbReference>
<dbReference type="SUPFAM" id="SSF54980">
    <property type="entry name" value="EF-G C-terminal domain-like"/>
    <property type="match status" value="2"/>
</dbReference>
<dbReference type="SUPFAM" id="SSF52540">
    <property type="entry name" value="P-loop containing nucleoside triphosphate hydrolases"/>
    <property type="match status" value="1"/>
</dbReference>
<dbReference type="SUPFAM" id="SSF54211">
    <property type="entry name" value="Ribosomal protein S5 domain 2-like"/>
    <property type="match status" value="1"/>
</dbReference>
<dbReference type="SUPFAM" id="SSF50447">
    <property type="entry name" value="Translation proteins"/>
    <property type="match status" value="1"/>
</dbReference>
<dbReference type="PROSITE" id="PS00301">
    <property type="entry name" value="G_TR_1"/>
    <property type="match status" value="1"/>
</dbReference>
<dbReference type="PROSITE" id="PS51722">
    <property type="entry name" value="G_TR_2"/>
    <property type="match status" value="1"/>
</dbReference>
<evidence type="ECO:0000255" key="1">
    <source>
        <dbReference type="HAMAP-Rule" id="MF_00054"/>
    </source>
</evidence>